<gene>
    <name evidence="1" type="primary">cmk</name>
    <name type="ordered locus">SPG_1527</name>
</gene>
<proteinExistence type="inferred from homology"/>
<keyword id="KW-0067">ATP-binding</keyword>
<keyword id="KW-0963">Cytoplasm</keyword>
<keyword id="KW-0418">Kinase</keyword>
<keyword id="KW-0547">Nucleotide-binding</keyword>
<keyword id="KW-0808">Transferase</keyword>
<sequence>MKTIQIAIDGPASSGKSTVAKIIAKDFGFTYLDTGAMYRAATYMALKNQLVVEEVEALLALLDQHPISFGRSETGDQLVFVGDVDITHPIRENEVTNHVSAIAAIPEVREKLVSLQQEIAQQGGIVMDGRDIGTVVLPQAELKIFLVASVDERAERRYKENIAKGIETDLETLKKEIAARDYKDSHRETSPLKQAEDAVYLDTTGLNIQEVVEKIKAEAEKRM</sequence>
<dbReference type="EC" id="2.7.4.25" evidence="1"/>
<dbReference type="EMBL" id="CP001015">
    <property type="protein sequence ID" value="ACF56278.1"/>
    <property type="molecule type" value="Genomic_DNA"/>
</dbReference>
<dbReference type="SMR" id="B5E6P3"/>
<dbReference type="KEGG" id="spx:SPG_1527"/>
<dbReference type="HOGENOM" id="CLU_079959_0_2_9"/>
<dbReference type="GO" id="GO:0005829">
    <property type="term" value="C:cytosol"/>
    <property type="evidence" value="ECO:0007669"/>
    <property type="project" value="TreeGrafter"/>
</dbReference>
<dbReference type="GO" id="GO:0005524">
    <property type="term" value="F:ATP binding"/>
    <property type="evidence" value="ECO:0007669"/>
    <property type="project" value="UniProtKB-UniRule"/>
</dbReference>
<dbReference type="GO" id="GO:0036430">
    <property type="term" value="F:CMP kinase activity"/>
    <property type="evidence" value="ECO:0007669"/>
    <property type="project" value="RHEA"/>
</dbReference>
<dbReference type="GO" id="GO:0036431">
    <property type="term" value="F:dCMP kinase activity"/>
    <property type="evidence" value="ECO:0007669"/>
    <property type="project" value="RHEA"/>
</dbReference>
<dbReference type="GO" id="GO:0015949">
    <property type="term" value="P:nucleobase-containing small molecule interconversion"/>
    <property type="evidence" value="ECO:0007669"/>
    <property type="project" value="TreeGrafter"/>
</dbReference>
<dbReference type="GO" id="GO:0006220">
    <property type="term" value="P:pyrimidine nucleotide metabolic process"/>
    <property type="evidence" value="ECO:0007669"/>
    <property type="project" value="UniProtKB-UniRule"/>
</dbReference>
<dbReference type="CDD" id="cd02020">
    <property type="entry name" value="CMPK"/>
    <property type="match status" value="1"/>
</dbReference>
<dbReference type="FunFam" id="3.40.50.300:FF:000484">
    <property type="entry name" value="Cytidylate kinase"/>
    <property type="match status" value="1"/>
</dbReference>
<dbReference type="Gene3D" id="3.40.50.300">
    <property type="entry name" value="P-loop containing nucleotide triphosphate hydrolases"/>
    <property type="match status" value="1"/>
</dbReference>
<dbReference type="HAMAP" id="MF_00238">
    <property type="entry name" value="Cytidyl_kinase_type1"/>
    <property type="match status" value="1"/>
</dbReference>
<dbReference type="InterPro" id="IPR003136">
    <property type="entry name" value="Cytidylate_kin"/>
</dbReference>
<dbReference type="InterPro" id="IPR011994">
    <property type="entry name" value="Cytidylate_kinase_dom"/>
</dbReference>
<dbReference type="InterPro" id="IPR027417">
    <property type="entry name" value="P-loop_NTPase"/>
</dbReference>
<dbReference type="NCBIfam" id="TIGR00017">
    <property type="entry name" value="cmk"/>
    <property type="match status" value="1"/>
</dbReference>
<dbReference type="PANTHER" id="PTHR21299:SF2">
    <property type="entry name" value="CYTIDYLATE KINASE"/>
    <property type="match status" value="1"/>
</dbReference>
<dbReference type="PANTHER" id="PTHR21299">
    <property type="entry name" value="CYTIDYLATE KINASE/PANTOATE-BETA-ALANINE LIGASE"/>
    <property type="match status" value="1"/>
</dbReference>
<dbReference type="Pfam" id="PF02224">
    <property type="entry name" value="Cytidylate_kin"/>
    <property type="match status" value="1"/>
</dbReference>
<dbReference type="SUPFAM" id="SSF52540">
    <property type="entry name" value="P-loop containing nucleoside triphosphate hydrolases"/>
    <property type="match status" value="1"/>
</dbReference>
<reference key="1">
    <citation type="journal article" date="2001" name="Microb. Drug Resist.">
        <title>Annotated draft genomic sequence from a Streptococcus pneumoniae type 19F clinical isolate.</title>
        <authorList>
            <person name="Dopazo J."/>
            <person name="Mendoza A."/>
            <person name="Herrero J."/>
            <person name="Caldara F."/>
            <person name="Humbert Y."/>
            <person name="Friedli L."/>
            <person name="Guerrier M."/>
            <person name="Grand-Schenk E."/>
            <person name="Gandin C."/>
            <person name="de Francesco M."/>
            <person name="Polissi A."/>
            <person name="Buell G."/>
            <person name="Feger G."/>
            <person name="Garcia E."/>
            <person name="Peitsch M."/>
            <person name="Garcia-Bustos J.F."/>
        </authorList>
    </citation>
    <scope>NUCLEOTIDE SEQUENCE [LARGE SCALE GENOMIC DNA]</scope>
    <source>
        <strain>G54</strain>
    </source>
</reference>
<reference key="2">
    <citation type="submission" date="2008-03" db="EMBL/GenBank/DDBJ databases">
        <title>Pneumococcal beta glucoside metabolism investigated by whole genome comparison.</title>
        <authorList>
            <person name="Mulas L."/>
            <person name="Trappetti C."/>
            <person name="Hakenbeck R."/>
            <person name="Iannelli F."/>
            <person name="Pozzi G."/>
            <person name="Davidsen T.M."/>
            <person name="Tettelin H."/>
            <person name="Oggioni M."/>
        </authorList>
    </citation>
    <scope>NUCLEOTIDE SEQUENCE [LARGE SCALE GENOMIC DNA]</scope>
    <source>
        <strain>G54</strain>
    </source>
</reference>
<evidence type="ECO:0000255" key="1">
    <source>
        <dbReference type="HAMAP-Rule" id="MF_00238"/>
    </source>
</evidence>
<accession>B5E6P3</accession>
<protein>
    <recommendedName>
        <fullName evidence="1">Cytidylate kinase</fullName>
        <shortName evidence="1">CK</shortName>
        <ecNumber evidence="1">2.7.4.25</ecNumber>
    </recommendedName>
    <alternativeName>
        <fullName evidence="1">Cytidine monophosphate kinase</fullName>
        <shortName evidence="1">CMP kinase</shortName>
    </alternativeName>
</protein>
<organism>
    <name type="scientific">Streptococcus pneumoniae serotype 19F (strain G54)</name>
    <dbReference type="NCBI Taxonomy" id="512566"/>
    <lineage>
        <taxon>Bacteria</taxon>
        <taxon>Bacillati</taxon>
        <taxon>Bacillota</taxon>
        <taxon>Bacilli</taxon>
        <taxon>Lactobacillales</taxon>
        <taxon>Streptococcaceae</taxon>
        <taxon>Streptococcus</taxon>
    </lineage>
</organism>
<comment type="catalytic activity">
    <reaction evidence="1">
        <text>CMP + ATP = CDP + ADP</text>
        <dbReference type="Rhea" id="RHEA:11600"/>
        <dbReference type="ChEBI" id="CHEBI:30616"/>
        <dbReference type="ChEBI" id="CHEBI:58069"/>
        <dbReference type="ChEBI" id="CHEBI:60377"/>
        <dbReference type="ChEBI" id="CHEBI:456216"/>
        <dbReference type="EC" id="2.7.4.25"/>
    </reaction>
</comment>
<comment type="catalytic activity">
    <reaction evidence="1">
        <text>dCMP + ATP = dCDP + ADP</text>
        <dbReference type="Rhea" id="RHEA:25094"/>
        <dbReference type="ChEBI" id="CHEBI:30616"/>
        <dbReference type="ChEBI" id="CHEBI:57566"/>
        <dbReference type="ChEBI" id="CHEBI:58593"/>
        <dbReference type="ChEBI" id="CHEBI:456216"/>
        <dbReference type="EC" id="2.7.4.25"/>
    </reaction>
</comment>
<comment type="subcellular location">
    <subcellularLocation>
        <location evidence="1">Cytoplasm</location>
    </subcellularLocation>
</comment>
<comment type="similarity">
    <text evidence="1">Belongs to the cytidylate kinase family. Type 1 subfamily.</text>
</comment>
<name>KCY_STRP4</name>
<feature type="chain" id="PRO_1000100693" description="Cytidylate kinase">
    <location>
        <begin position="1"/>
        <end position="223"/>
    </location>
</feature>
<feature type="binding site" evidence="1">
    <location>
        <begin position="10"/>
        <end position="18"/>
    </location>
    <ligand>
        <name>ATP</name>
        <dbReference type="ChEBI" id="CHEBI:30616"/>
    </ligand>
</feature>